<accession>Q73IS9</accession>
<protein>
    <recommendedName>
        <fullName evidence="1">Ribosomal RNA large subunit methyltransferase E</fullName>
        <ecNumber evidence="1">2.1.1.166</ecNumber>
    </recommendedName>
    <alternativeName>
        <fullName evidence="1">23S rRNA Um2552 methyltransferase</fullName>
    </alternativeName>
    <alternativeName>
        <fullName evidence="1">rRNA (uridine-2'-O-)-methyltransferase</fullName>
    </alternativeName>
</protein>
<keyword id="KW-0963">Cytoplasm</keyword>
<keyword id="KW-0489">Methyltransferase</keyword>
<keyword id="KW-0698">rRNA processing</keyword>
<keyword id="KW-0949">S-adenosyl-L-methionine</keyword>
<keyword id="KW-0808">Transferase</keyword>
<reference key="1">
    <citation type="journal article" date="2004" name="PLoS Biol.">
        <title>Phylogenomics of the reproductive parasite Wolbachia pipientis wMel: a streamlined genome overrun by mobile genetic elements.</title>
        <authorList>
            <person name="Wu M."/>
            <person name="Sun L.V."/>
            <person name="Vamathevan J.J."/>
            <person name="Riegler M."/>
            <person name="DeBoy R.T."/>
            <person name="Brownlie J.C."/>
            <person name="McGraw E.A."/>
            <person name="Martin W."/>
            <person name="Esser C."/>
            <person name="Ahmadinejad N."/>
            <person name="Wiegand C."/>
            <person name="Madupu R."/>
            <person name="Beanan M.J."/>
            <person name="Brinkac L.M."/>
            <person name="Daugherty S.C."/>
            <person name="Durkin A.S."/>
            <person name="Kolonay J.F."/>
            <person name="Nelson W.C."/>
            <person name="Mohamoud Y."/>
            <person name="Lee P."/>
            <person name="Berry K.J."/>
            <person name="Young M.B."/>
            <person name="Utterback T.R."/>
            <person name="Weidman J.F."/>
            <person name="Nierman W.C."/>
            <person name="Paulsen I.T."/>
            <person name="Nelson K.E."/>
            <person name="Tettelin H."/>
            <person name="O'Neill S.L."/>
            <person name="Eisen J.A."/>
        </authorList>
    </citation>
    <scope>NUCLEOTIDE SEQUENCE [LARGE SCALE GENOMIC DNA]</scope>
</reference>
<comment type="function">
    <text evidence="1">Specifically methylates the uridine in position 2552 of 23S rRNA at the 2'-O position of the ribose in the fully assembled 50S ribosomal subunit.</text>
</comment>
<comment type="catalytic activity">
    <reaction evidence="1">
        <text>uridine(2552) in 23S rRNA + S-adenosyl-L-methionine = 2'-O-methyluridine(2552) in 23S rRNA + S-adenosyl-L-homocysteine + H(+)</text>
        <dbReference type="Rhea" id="RHEA:42720"/>
        <dbReference type="Rhea" id="RHEA-COMP:10202"/>
        <dbReference type="Rhea" id="RHEA-COMP:10203"/>
        <dbReference type="ChEBI" id="CHEBI:15378"/>
        <dbReference type="ChEBI" id="CHEBI:57856"/>
        <dbReference type="ChEBI" id="CHEBI:59789"/>
        <dbReference type="ChEBI" id="CHEBI:65315"/>
        <dbReference type="ChEBI" id="CHEBI:74478"/>
        <dbReference type="EC" id="2.1.1.166"/>
    </reaction>
</comment>
<comment type="subcellular location">
    <subcellularLocation>
        <location evidence="1">Cytoplasm</location>
    </subcellularLocation>
</comment>
<comment type="similarity">
    <text evidence="1">Belongs to the class I-like SAM-binding methyltransferase superfamily. RNA methyltransferase RlmE family.</text>
</comment>
<feature type="chain" id="PRO_0000155552" description="Ribosomal RNA large subunit methyltransferase E">
    <location>
        <begin position="1"/>
        <end position="192"/>
    </location>
</feature>
<feature type="active site" description="Proton acceptor" evidence="1">
    <location>
        <position position="142"/>
    </location>
</feature>
<feature type="binding site" evidence="1">
    <location>
        <position position="46"/>
    </location>
    <ligand>
        <name>S-adenosyl-L-methionine</name>
        <dbReference type="ChEBI" id="CHEBI:59789"/>
    </ligand>
</feature>
<feature type="binding site" evidence="1">
    <location>
        <position position="48"/>
    </location>
    <ligand>
        <name>S-adenosyl-L-methionine</name>
        <dbReference type="ChEBI" id="CHEBI:59789"/>
    </ligand>
</feature>
<feature type="binding site" evidence="1">
    <location>
        <position position="63"/>
    </location>
    <ligand>
        <name>S-adenosyl-L-methionine</name>
        <dbReference type="ChEBI" id="CHEBI:59789"/>
    </ligand>
</feature>
<feature type="binding site" evidence="1">
    <location>
        <position position="79"/>
    </location>
    <ligand>
        <name>S-adenosyl-L-methionine</name>
        <dbReference type="ChEBI" id="CHEBI:59789"/>
    </ligand>
</feature>
<feature type="binding site" evidence="1">
    <location>
        <position position="102"/>
    </location>
    <ligand>
        <name>S-adenosyl-L-methionine</name>
        <dbReference type="ChEBI" id="CHEBI:59789"/>
    </ligand>
</feature>
<dbReference type="EC" id="2.1.1.166" evidence="1"/>
<dbReference type="EMBL" id="AE017196">
    <property type="protein sequence ID" value="AAS13832.1"/>
    <property type="molecule type" value="Genomic_DNA"/>
</dbReference>
<dbReference type="RefSeq" id="WP_010962344.1">
    <property type="nucleotide sequence ID" value="NZ_OX384529.1"/>
</dbReference>
<dbReference type="SMR" id="Q73IS9"/>
<dbReference type="EnsemblBacteria" id="AAS13832">
    <property type="protein sequence ID" value="AAS13832"/>
    <property type="gene ID" value="WD_0070"/>
</dbReference>
<dbReference type="KEGG" id="wol:WD_0070"/>
<dbReference type="eggNOG" id="COG0293">
    <property type="taxonomic scope" value="Bacteria"/>
</dbReference>
<dbReference type="Proteomes" id="UP000008215">
    <property type="component" value="Chromosome"/>
</dbReference>
<dbReference type="GO" id="GO:0005737">
    <property type="term" value="C:cytoplasm"/>
    <property type="evidence" value="ECO:0007669"/>
    <property type="project" value="UniProtKB-SubCell"/>
</dbReference>
<dbReference type="GO" id="GO:0008650">
    <property type="term" value="F:rRNA (uridine-2'-O-)-methyltransferase activity"/>
    <property type="evidence" value="ECO:0007669"/>
    <property type="project" value="UniProtKB-UniRule"/>
</dbReference>
<dbReference type="FunFam" id="3.40.50.150:FF:000220">
    <property type="entry name" value="CAMK protein kinase"/>
    <property type="match status" value="1"/>
</dbReference>
<dbReference type="Gene3D" id="3.40.50.150">
    <property type="entry name" value="Vaccinia Virus protein VP39"/>
    <property type="match status" value="1"/>
</dbReference>
<dbReference type="HAMAP" id="MF_01547">
    <property type="entry name" value="RNA_methyltr_E"/>
    <property type="match status" value="1"/>
</dbReference>
<dbReference type="InterPro" id="IPR050082">
    <property type="entry name" value="RNA_methyltr_RlmE"/>
</dbReference>
<dbReference type="InterPro" id="IPR002877">
    <property type="entry name" value="RNA_MeTrfase_FtsJ_dom"/>
</dbReference>
<dbReference type="InterPro" id="IPR015507">
    <property type="entry name" value="rRNA-MeTfrase_E"/>
</dbReference>
<dbReference type="InterPro" id="IPR029063">
    <property type="entry name" value="SAM-dependent_MTases_sf"/>
</dbReference>
<dbReference type="PANTHER" id="PTHR10920">
    <property type="entry name" value="RIBOSOMAL RNA METHYLTRANSFERASE"/>
    <property type="match status" value="1"/>
</dbReference>
<dbReference type="PANTHER" id="PTHR10920:SF18">
    <property type="entry name" value="RRNA METHYLTRANSFERASE 2, MITOCHONDRIAL"/>
    <property type="match status" value="1"/>
</dbReference>
<dbReference type="Pfam" id="PF01728">
    <property type="entry name" value="FtsJ"/>
    <property type="match status" value="1"/>
</dbReference>
<dbReference type="PIRSF" id="PIRSF005461">
    <property type="entry name" value="23S_rRNA_mtase"/>
    <property type="match status" value="1"/>
</dbReference>
<dbReference type="SUPFAM" id="SSF53335">
    <property type="entry name" value="S-adenosyl-L-methionine-dependent methyltransferases"/>
    <property type="match status" value="1"/>
</dbReference>
<proteinExistence type="inferred from homology"/>
<gene>
    <name evidence="1" type="primary">rlmE</name>
    <name evidence="1" type="synonym">ftsJ</name>
    <name evidence="1" type="synonym">rrmJ</name>
    <name type="ordered locus">WD_0070</name>
</gene>
<sequence length="192" mass="21702">MNDQYVQKTSKDGYRSRSAYKLVEMDNKFKLFQEGQKIIDLGASPGGWSQVASQKGANVVALDIKPMNAINGVEFIQCDIINEFEILREKFKDQKFDVILSDMAPESCGLKSLDHIRIMLLCEAALNFAKHFLSHGGTFVVKIFQGESDKDFCNELKKMFKTVKYFKPKSSRSESTEMYLVSLGFIGSKPSI</sequence>
<name>RLME_WOLPM</name>
<organism>
    <name type="scientific">Wolbachia pipientis wMel</name>
    <dbReference type="NCBI Taxonomy" id="163164"/>
    <lineage>
        <taxon>Bacteria</taxon>
        <taxon>Pseudomonadati</taxon>
        <taxon>Pseudomonadota</taxon>
        <taxon>Alphaproteobacteria</taxon>
        <taxon>Rickettsiales</taxon>
        <taxon>Anaplasmataceae</taxon>
        <taxon>Wolbachieae</taxon>
        <taxon>Wolbachia</taxon>
    </lineage>
</organism>
<evidence type="ECO:0000255" key="1">
    <source>
        <dbReference type="HAMAP-Rule" id="MF_01547"/>
    </source>
</evidence>